<sequence>MMSPMASILMYTHFRMWKHALNVWSITLFQNFRLTAELIILFTLLNFLFLIPVMNVFAFFIHNVVNFSLIIYFSKLYLKVKGNEEEYKREIERTKLAQALKTYLPHAVTLTFATYAMTVAYLILLFVSLLILGLITGITVFTFGTDFIIAYLIFIVLLLILYFWIITSYPVFFARTVIEGQTPRDFFFLFLTAPFSKLLWKLAFSLEVLFSSFVIGFFSLFIFLFQFVMSHLFPPLFFLTYFVAFSNTLLIYLFGVISVSYLLWKREGK</sequence>
<gene>
    <name type="ordered locus">aq_1793</name>
</gene>
<protein>
    <recommendedName>
        <fullName>Uncharacterized protein aq_1793</fullName>
    </recommendedName>
</protein>
<accession>O67662</accession>
<evidence type="ECO:0000255" key="1"/>
<evidence type="ECO:0000305" key="2"/>
<reference key="1">
    <citation type="journal article" date="1998" name="Nature">
        <title>The complete genome of the hyperthermophilic bacterium Aquifex aeolicus.</title>
        <authorList>
            <person name="Deckert G."/>
            <person name="Warren P.V."/>
            <person name="Gaasterland T."/>
            <person name="Young W.G."/>
            <person name="Lenox A.L."/>
            <person name="Graham D.E."/>
            <person name="Overbeek R."/>
            <person name="Snead M.A."/>
            <person name="Keller M."/>
            <person name="Aujay M."/>
            <person name="Huber R."/>
            <person name="Feldman R.A."/>
            <person name="Short J.M."/>
            <person name="Olsen G.J."/>
            <person name="Swanson R.V."/>
        </authorList>
    </citation>
    <scope>NUCLEOTIDE SEQUENCE [LARGE SCALE GENOMIC DNA]</scope>
    <source>
        <strain>VF5</strain>
    </source>
</reference>
<feature type="chain" id="PRO_0000186945" description="Uncharacterized protein aq_1793">
    <location>
        <begin position="1"/>
        <end position="269"/>
    </location>
</feature>
<feature type="transmembrane region" description="Helical" evidence="1">
    <location>
        <begin position="21"/>
        <end position="43"/>
    </location>
</feature>
<feature type="transmembrane region" description="Helical" evidence="1">
    <location>
        <begin position="48"/>
        <end position="70"/>
    </location>
</feature>
<feature type="transmembrane region" description="Helical" evidence="1">
    <location>
        <begin position="121"/>
        <end position="143"/>
    </location>
</feature>
<feature type="transmembrane region" description="Helical" evidence="1">
    <location>
        <begin position="147"/>
        <end position="166"/>
    </location>
</feature>
<feature type="transmembrane region" description="Helical" evidence="1">
    <location>
        <begin position="205"/>
        <end position="227"/>
    </location>
</feature>
<feature type="transmembrane region" description="Helical" evidence="1">
    <location>
        <begin position="242"/>
        <end position="264"/>
    </location>
</feature>
<name>Y1793_AQUAE</name>
<organism>
    <name type="scientific">Aquifex aeolicus (strain VF5)</name>
    <dbReference type="NCBI Taxonomy" id="224324"/>
    <lineage>
        <taxon>Bacteria</taxon>
        <taxon>Pseudomonadati</taxon>
        <taxon>Aquificota</taxon>
        <taxon>Aquificia</taxon>
        <taxon>Aquificales</taxon>
        <taxon>Aquificaceae</taxon>
        <taxon>Aquifex</taxon>
    </lineage>
</organism>
<comment type="subcellular location">
    <subcellularLocation>
        <location evidence="2">Cell membrane</location>
        <topology evidence="2">Multi-pass membrane protein</topology>
    </subcellularLocation>
</comment>
<proteinExistence type="predicted"/>
<dbReference type="EMBL" id="AE000657">
    <property type="protein sequence ID" value="AAC07625.1"/>
    <property type="molecule type" value="Genomic_DNA"/>
</dbReference>
<dbReference type="PIR" id="D70454">
    <property type="entry name" value="D70454"/>
</dbReference>
<dbReference type="RefSeq" id="NP_214228.1">
    <property type="nucleotide sequence ID" value="NC_000918.1"/>
</dbReference>
<dbReference type="SMR" id="O67662"/>
<dbReference type="STRING" id="224324.aq_1793"/>
<dbReference type="EnsemblBacteria" id="AAC07625">
    <property type="protein sequence ID" value="AAC07625"/>
    <property type="gene ID" value="aq_1793"/>
</dbReference>
<dbReference type="KEGG" id="aae:aq_1793"/>
<dbReference type="PATRIC" id="fig|224324.8.peg.1386"/>
<dbReference type="HOGENOM" id="CLU_1033061_0_0_0"/>
<dbReference type="InParanoid" id="O67662"/>
<dbReference type="Proteomes" id="UP000000798">
    <property type="component" value="Chromosome"/>
</dbReference>
<dbReference type="GO" id="GO:0005886">
    <property type="term" value="C:plasma membrane"/>
    <property type="evidence" value="ECO:0007669"/>
    <property type="project" value="UniProtKB-SubCell"/>
</dbReference>
<keyword id="KW-1003">Cell membrane</keyword>
<keyword id="KW-0472">Membrane</keyword>
<keyword id="KW-1185">Reference proteome</keyword>
<keyword id="KW-0812">Transmembrane</keyword>
<keyword id="KW-1133">Transmembrane helix</keyword>